<gene>
    <name evidence="1" type="primary">smg</name>
    <name type="ordered locus">SG4035</name>
</gene>
<proteinExistence type="inferred from homology"/>
<comment type="similarity">
    <text evidence="1">Belongs to the Smg family.</text>
</comment>
<protein>
    <recommendedName>
        <fullName evidence="1">Protein Smg</fullName>
    </recommendedName>
</protein>
<sequence length="157" mass="18540">MFDVLMYLFETYIHNEAELRVDQDRLERDLTDAGFDREDIYNALLWLEKLADYQDGLAEPMQLASDPLSMRIYTVEECERLDASCRGFLLFLEQIQVLNLETREMVIERVLALDTAEFDLEDLKWVILMVLFNIPGCENAYQQMEELLFEVNEGMLH</sequence>
<dbReference type="EMBL" id="AM933173">
    <property type="protein sequence ID" value="CAR39805.1"/>
    <property type="molecule type" value="Genomic_DNA"/>
</dbReference>
<dbReference type="RefSeq" id="WP_000460663.1">
    <property type="nucleotide sequence ID" value="NC_011274.1"/>
</dbReference>
<dbReference type="SMR" id="B5R7P4"/>
<dbReference type="KEGG" id="seg:SG4035"/>
<dbReference type="HOGENOM" id="CLU_133242_0_0_6"/>
<dbReference type="Proteomes" id="UP000008321">
    <property type="component" value="Chromosome"/>
</dbReference>
<dbReference type="HAMAP" id="MF_00598">
    <property type="entry name" value="Smg"/>
    <property type="match status" value="1"/>
</dbReference>
<dbReference type="InterPro" id="IPR007456">
    <property type="entry name" value="Smg"/>
</dbReference>
<dbReference type="NCBIfam" id="NF002897">
    <property type="entry name" value="PRK03430.1"/>
    <property type="match status" value="1"/>
</dbReference>
<dbReference type="PANTHER" id="PTHR38692">
    <property type="entry name" value="PROTEIN SMG"/>
    <property type="match status" value="1"/>
</dbReference>
<dbReference type="PANTHER" id="PTHR38692:SF1">
    <property type="entry name" value="PROTEIN SMG"/>
    <property type="match status" value="1"/>
</dbReference>
<dbReference type="Pfam" id="PF04361">
    <property type="entry name" value="DUF494"/>
    <property type="match status" value="1"/>
</dbReference>
<name>SMG_SALG2</name>
<accession>B5R7P4</accession>
<organism>
    <name type="scientific">Salmonella gallinarum (strain 287/91 / NCTC 13346)</name>
    <dbReference type="NCBI Taxonomy" id="550538"/>
    <lineage>
        <taxon>Bacteria</taxon>
        <taxon>Pseudomonadati</taxon>
        <taxon>Pseudomonadota</taxon>
        <taxon>Gammaproteobacteria</taxon>
        <taxon>Enterobacterales</taxon>
        <taxon>Enterobacteriaceae</taxon>
        <taxon>Salmonella</taxon>
    </lineage>
</organism>
<reference key="1">
    <citation type="journal article" date="2008" name="Genome Res.">
        <title>Comparative genome analysis of Salmonella enteritidis PT4 and Salmonella gallinarum 287/91 provides insights into evolutionary and host adaptation pathways.</title>
        <authorList>
            <person name="Thomson N.R."/>
            <person name="Clayton D.J."/>
            <person name="Windhorst D."/>
            <person name="Vernikos G."/>
            <person name="Davidson S."/>
            <person name="Churcher C."/>
            <person name="Quail M.A."/>
            <person name="Stevens M."/>
            <person name="Jones M.A."/>
            <person name="Watson M."/>
            <person name="Barron A."/>
            <person name="Layton A."/>
            <person name="Pickard D."/>
            <person name="Kingsley R.A."/>
            <person name="Bignell A."/>
            <person name="Clark L."/>
            <person name="Harris B."/>
            <person name="Ormond D."/>
            <person name="Abdellah Z."/>
            <person name="Brooks K."/>
            <person name="Cherevach I."/>
            <person name="Chillingworth T."/>
            <person name="Woodward J."/>
            <person name="Norberczak H."/>
            <person name="Lord A."/>
            <person name="Arrowsmith C."/>
            <person name="Jagels K."/>
            <person name="Moule S."/>
            <person name="Mungall K."/>
            <person name="Saunders M."/>
            <person name="Whitehead S."/>
            <person name="Chabalgoity J.A."/>
            <person name="Maskell D."/>
            <person name="Humphreys T."/>
            <person name="Roberts M."/>
            <person name="Barrow P.A."/>
            <person name="Dougan G."/>
            <person name="Parkhill J."/>
        </authorList>
    </citation>
    <scope>NUCLEOTIDE SEQUENCE [LARGE SCALE GENOMIC DNA]</scope>
    <source>
        <strain>287/91 / NCTC 13346</strain>
    </source>
</reference>
<evidence type="ECO:0000255" key="1">
    <source>
        <dbReference type="HAMAP-Rule" id="MF_00598"/>
    </source>
</evidence>
<feature type="chain" id="PRO_1000129900" description="Protein Smg">
    <location>
        <begin position="1"/>
        <end position="157"/>
    </location>
</feature>